<accession>Q8YP80</accession>
<protein>
    <recommendedName>
        <fullName evidence="2">Formamidopyrimidine-DNA glycosylase</fullName>
        <shortName evidence="2">Fapy-DNA glycosylase</shortName>
        <ecNumber evidence="2">3.2.2.23</ecNumber>
    </recommendedName>
    <alternativeName>
        <fullName evidence="2">DNA-(apurinic or apyrimidinic site) lyase MutM</fullName>
        <shortName evidence="2">AP lyase MutM</shortName>
        <ecNumber evidence="2">4.2.99.18</ecNumber>
    </alternativeName>
</protein>
<dbReference type="EC" id="3.2.2.23" evidence="2"/>
<dbReference type="EC" id="4.2.99.18" evidence="2"/>
<dbReference type="EMBL" id="BA000019">
    <property type="protein sequence ID" value="BAB76019.1"/>
    <property type="molecule type" value="Genomic_DNA"/>
</dbReference>
<dbReference type="PIR" id="AI2345">
    <property type="entry name" value="AI2345"/>
</dbReference>
<dbReference type="RefSeq" id="WP_010998458.1">
    <property type="nucleotide sequence ID" value="NZ_RSCN01000027.1"/>
</dbReference>
<dbReference type="SMR" id="Q8YP80"/>
<dbReference type="STRING" id="103690.gene:10496369"/>
<dbReference type="KEGG" id="ana:alr4320"/>
<dbReference type="eggNOG" id="COG0266">
    <property type="taxonomic scope" value="Bacteria"/>
</dbReference>
<dbReference type="OrthoDB" id="9800855at2"/>
<dbReference type="Proteomes" id="UP000002483">
    <property type="component" value="Chromosome"/>
</dbReference>
<dbReference type="GO" id="GO:0034039">
    <property type="term" value="F:8-oxo-7,8-dihydroguanine DNA N-glycosylase activity"/>
    <property type="evidence" value="ECO:0007669"/>
    <property type="project" value="TreeGrafter"/>
</dbReference>
<dbReference type="GO" id="GO:0140078">
    <property type="term" value="F:class I DNA-(apurinic or apyrimidinic site) endonuclease activity"/>
    <property type="evidence" value="ECO:0007669"/>
    <property type="project" value="UniProtKB-EC"/>
</dbReference>
<dbReference type="GO" id="GO:0003684">
    <property type="term" value="F:damaged DNA binding"/>
    <property type="evidence" value="ECO:0007669"/>
    <property type="project" value="InterPro"/>
</dbReference>
<dbReference type="GO" id="GO:0008270">
    <property type="term" value="F:zinc ion binding"/>
    <property type="evidence" value="ECO:0007669"/>
    <property type="project" value="UniProtKB-UniRule"/>
</dbReference>
<dbReference type="GO" id="GO:0006284">
    <property type="term" value="P:base-excision repair"/>
    <property type="evidence" value="ECO:0007669"/>
    <property type="project" value="InterPro"/>
</dbReference>
<dbReference type="CDD" id="cd08966">
    <property type="entry name" value="EcFpg-like_N"/>
    <property type="match status" value="1"/>
</dbReference>
<dbReference type="FunFam" id="1.10.8.50:FF:000003">
    <property type="entry name" value="Formamidopyrimidine-DNA glycosylase"/>
    <property type="match status" value="1"/>
</dbReference>
<dbReference type="Gene3D" id="1.10.8.50">
    <property type="match status" value="1"/>
</dbReference>
<dbReference type="Gene3D" id="3.20.190.10">
    <property type="entry name" value="MutM-like, N-terminal"/>
    <property type="match status" value="1"/>
</dbReference>
<dbReference type="HAMAP" id="MF_00103">
    <property type="entry name" value="Fapy_DNA_glycosyl"/>
    <property type="match status" value="1"/>
</dbReference>
<dbReference type="InterPro" id="IPR015886">
    <property type="entry name" value="DNA_glyclase/AP_lyase_DNA-bd"/>
</dbReference>
<dbReference type="InterPro" id="IPR015887">
    <property type="entry name" value="DNA_glyclase_Znf_dom_DNA_BS"/>
</dbReference>
<dbReference type="InterPro" id="IPR020629">
    <property type="entry name" value="Formamido-pyr_DNA_Glyclase"/>
</dbReference>
<dbReference type="InterPro" id="IPR012319">
    <property type="entry name" value="FPG_cat"/>
</dbReference>
<dbReference type="InterPro" id="IPR035937">
    <property type="entry name" value="MutM-like_N-ter"/>
</dbReference>
<dbReference type="InterPro" id="IPR010979">
    <property type="entry name" value="Ribosomal_uS13-like_H2TH"/>
</dbReference>
<dbReference type="InterPro" id="IPR000214">
    <property type="entry name" value="Znf_DNA_glyclase/AP_lyase"/>
</dbReference>
<dbReference type="InterPro" id="IPR010663">
    <property type="entry name" value="Znf_FPG/IleRS"/>
</dbReference>
<dbReference type="NCBIfam" id="TIGR00577">
    <property type="entry name" value="fpg"/>
    <property type="match status" value="1"/>
</dbReference>
<dbReference type="NCBIfam" id="NF002211">
    <property type="entry name" value="PRK01103.1"/>
    <property type="match status" value="1"/>
</dbReference>
<dbReference type="NCBIfam" id="NF010551">
    <property type="entry name" value="PRK13945.1"/>
    <property type="match status" value="1"/>
</dbReference>
<dbReference type="PANTHER" id="PTHR22993">
    <property type="entry name" value="FORMAMIDOPYRIMIDINE-DNA GLYCOSYLASE"/>
    <property type="match status" value="1"/>
</dbReference>
<dbReference type="PANTHER" id="PTHR22993:SF9">
    <property type="entry name" value="FORMAMIDOPYRIMIDINE-DNA GLYCOSYLASE"/>
    <property type="match status" value="1"/>
</dbReference>
<dbReference type="Pfam" id="PF01149">
    <property type="entry name" value="Fapy_DNA_glyco"/>
    <property type="match status" value="1"/>
</dbReference>
<dbReference type="Pfam" id="PF06831">
    <property type="entry name" value="H2TH"/>
    <property type="match status" value="1"/>
</dbReference>
<dbReference type="Pfam" id="PF06827">
    <property type="entry name" value="zf-FPG_IleRS"/>
    <property type="match status" value="1"/>
</dbReference>
<dbReference type="SMART" id="SM00898">
    <property type="entry name" value="Fapy_DNA_glyco"/>
    <property type="match status" value="1"/>
</dbReference>
<dbReference type="SMART" id="SM01232">
    <property type="entry name" value="H2TH"/>
    <property type="match status" value="1"/>
</dbReference>
<dbReference type="SUPFAM" id="SSF57716">
    <property type="entry name" value="Glucocorticoid receptor-like (DNA-binding domain)"/>
    <property type="match status" value="1"/>
</dbReference>
<dbReference type="SUPFAM" id="SSF81624">
    <property type="entry name" value="N-terminal domain of MutM-like DNA repair proteins"/>
    <property type="match status" value="1"/>
</dbReference>
<dbReference type="SUPFAM" id="SSF46946">
    <property type="entry name" value="S13-like H2TH domain"/>
    <property type="match status" value="1"/>
</dbReference>
<dbReference type="PROSITE" id="PS51068">
    <property type="entry name" value="FPG_CAT"/>
    <property type="match status" value="1"/>
</dbReference>
<dbReference type="PROSITE" id="PS01242">
    <property type="entry name" value="ZF_FPG_1"/>
    <property type="match status" value="1"/>
</dbReference>
<dbReference type="PROSITE" id="PS51066">
    <property type="entry name" value="ZF_FPG_2"/>
    <property type="match status" value="1"/>
</dbReference>
<evidence type="ECO:0000250" key="1"/>
<evidence type="ECO:0000255" key="2">
    <source>
        <dbReference type="HAMAP-Rule" id="MF_00103"/>
    </source>
</evidence>
<gene>
    <name evidence="2" type="primary">mutM</name>
    <name evidence="2" type="synonym">fpg</name>
    <name type="ordered locus">alr4320</name>
</gene>
<reference key="1">
    <citation type="journal article" date="2001" name="DNA Res.">
        <title>Complete genomic sequence of the filamentous nitrogen-fixing cyanobacterium Anabaena sp. strain PCC 7120.</title>
        <authorList>
            <person name="Kaneko T."/>
            <person name="Nakamura Y."/>
            <person name="Wolk C.P."/>
            <person name="Kuritz T."/>
            <person name="Sasamoto S."/>
            <person name="Watanabe A."/>
            <person name="Iriguchi M."/>
            <person name="Ishikawa A."/>
            <person name="Kawashima K."/>
            <person name="Kimura T."/>
            <person name="Kishida Y."/>
            <person name="Kohara M."/>
            <person name="Matsumoto M."/>
            <person name="Matsuno A."/>
            <person name="Muraki A."/>
            <person name="Nakazaki N."/>
            <person name="Shimpo S."/>
            <person name="Sugimoto M."/>
            <person name="Takazawa M."/>
            <person name="Yamada M."/>
            <person name="Yasuda M."/>
            <person name="Tabata S."/>
        </authorList>
    </citation>
    <scope>NUCLEOTIDE SEQUENCE [LARGE SCALE GENOMIC DNA]</scope>
    <source>
        <strain>PCC 7120 / SAG 25.82 / UTEX 2576</strain>
    </source>
</reference>
<sequence>MPELPEVETVRRGLNQLTLNRKITGGDVLLHRTIAHPFSVGDFLNGITGSTISTWHRRGKYLLAELSASPSTTSIPWLGVHLRMTGQLLWLNQDEPLHKHTRVRIFFEEEQELRFVDQRTFGQMWWVPPGIAVESVITGLAKLAVDPFSPEFTVEYLANKLHNRRRPIKTALLDQSVVAGLGNIYADEALFKSGVLPETLCTEVQLKQIKLLRTAIIQVLETSIEAGGTTFSNFLNVKGVNGNYGGVAWVYNRAGEPCKVCGDVIQRIKLGGRSSHFCRQCQV</sequence>
<feature type="initiator methionine" description="Removed" evidence="1">
    <location>
        <position position="1"/>
    </location>
</feature>
<feature type="chain" id="PRO_0000170806" description="Formamidopyrimidine-DNA glycosylase">
    <location>
        <begin position="2"/>
        <end position="283"/>
    </location>
</feature>
<feature type="zinc finger region" description="FPG-type" evidence="2">
    <location>
        <begin position="249"/>
        <end position="283"/>
    </location>
</feature>
<feature type="active site" description="Schiff-base intermediate with DNA" evidence="2">
    <location>
        <position position="2"/>
    </location>
</feature>
<feature type="active site" description="Proton donor" evidence="2">
    <location>
        <position position="3"/>
    </location>
</feature>
<feature type="active site" description="Proton donor; for beta-elimination activity" evidence="2">
    <location>
        <position position="60"/>
    </location>
</feature>
<feature type="active site" description="Proton donor; for delta-elimination activity" evidence="2">
    <location>
        <position position="273"/>
    </location>
</feature>
<feature type="binding site" evidence="2">
    <location>
        <position position="100"/>
    </location>
    <ligand>
        <name>DNA</name>
        <dbReference type="ChEBI" id="CHEBI:16991"/>
    </ligand>
</feature>
<feature type="binding site" evidence="2">
    <location>
        <position position="119"/>
    </location>
    <ligand>
        <name>DNA</name>
        <dbReference type="ChEBI" id="CHEBI:16991"/>
    </ligand>
</feature>
<feature type="binding site" evidence="2">
    <location>
        <position position="164"/>
    </location>
    <ligand>
        <name>DNA</name>
        <dbReference type="ChEBI" id="CHEBI:16991"/>
    </ligand>
</feature>
<comment type="function">
    <text evidence="2">Involved in base excision repair of DNA damaged by oxidation or by mutagenic agents. Acts as a DNA glycosylase that recognizes and removes damaged bases. Has a preference for oxidized purines, such as 7,8-dihydro-8-oxoguanine (8-oxoG). Has AP (apurinic/apyrimidinic) lyase activity and introduces nicks in the DNA strand. Cleaves the DNA backbone by beta-delta elimination to generate a single-strand break at the site of the removed base with both 3'- and 5'-phosphates.</text>
</comment>
<comment type="catalytic activity">
    <reaction evidence="2">
        <text>Hydrolysis of DNA containing ring-opened 7-methylguanine residues, releasing 2,6-diamino-4-hydroxy-5-(N-methyl)formamidopyrimidine.</text>
        <dbReference type="EC" id="3.2.2.23"/>
    </reaction>
</comment>
<comment type="catalytic activity">
    <reaction evidence="2">
        <text>2'-deoxyribonucleotide-(2'-deoxyribose 5'-phosphate)-2'-deoxyribonucleotide-DNA = a 3'-end 2'-deoxyribonucleotide-(2,3-dehydro-2,3-deoxyribose 5'-phosphate)-DNA + a 5'-end 5'-phospho-2'-deoxyribonucleoside-DNA + H(+)</text>
        <dbReference type="Rhea" id="RHEA:66592"/>
        <dbReference type="Rhea" id="RHEA-COMP:13180"/>
        <dbReference type="Rhea" id="RHEA-COMP:16897"/>
        <dbReference type="Rhea" id="RHEA-COMP:17067"/>
        <dbReference type="ChEBI" id="CHEBI:15378"/>
        <dbReference type="ChEBI" id="CHEBI:136412"/>
        <dbReference type="ChEBI" id="CHEBI:157695"/>
        <dbReference type="ChEBI" id="CHEBI:167181"/>
        <dbReference type="EC" id="4.2.99.18"/>
    </reaction>
</comment>
<comment type="cofactor">
    <cofactor evidence="2">
        <name>Zn(2+)</name>
        <dbReference type="ChEBI" id="CHEBI:29105"/>
    </cofactor>
    <text evidence="2">Binds 1 zinc ion per subunit.</text>
</comment>
<comment type="subunit">
    <text evidence="2">Monomer.</text>
</comment>
<comment type="similarity">
    <text evidence="2">Belongs to the FPG family.</text>
</comment>
<proteinExistence type="inferred from homology"/>
<organism>
    <name type="scientific">Nostoc sp. (strain PCC 7120 / SAG 25.82 / UTEX 2576)</name>
    <dbReference type="NCBI Taxonomy" id="103690"/>
    <lineage>
        <taxon>Bacteria</taxon>
        <taxon>Bacillati</taxon>
        <taxon>Cyanobacteriota</taxon>
        <taxon>Cyanophyceae</taxon>
        <taxon>Nostocales</taxon>
        <taxon>Nostocaceae</taxon>
        <taxon>Nostoc</taxon>
    </lineage>
</organism>
<keyword id="KW-0227">DNA damage</keyword>
<keyword id="KW-0234">DNA repair</keyword>
<keyword id="KW-0238">DNA-binding</keyword>
<keyword id="KW-0326">Glycosidase</keyword>
<keyword id="KW-0378">Hydrolase</keyword>
<keyword id="KW-0456">Lyase</keyword>
<keyword id="KW-0479">Metal-binding</keyword>
<keyword id="KW-0511">Multifunctional enzyme</keyword>
<keyword id="KW-1185">Reference proteome</keyword>
<keyword id="KW-0862">Zinc</keyword>
<keyword id="KW-0863">Zinc-finger</keyword>
<name>FPG_NOSS1</name>